<organism>
    <name type="scientific">Macaca fascicularis</name>
    <name type="common">Crab-eating macaque</name>
    <name type="synonym">Cynomolgus monkey</name>
    <dbReference type="NCBI Taxonomy" id="9541"/>
    <lineage>
        <taxon>Eukaryota</taxon>
        <taxon>Metazoa</taxon>
        <taxon>Chordata</taxon>
        <taxon>Craniata</taxon>
        <taxon>Vertebrata</taxon>
        <taxon>Euteleostomi</taxon>
        <taxon>Mammalia</taxon>
        <taxon>Eutheria</taxon>
        <taxon>Euarchontoglires</taxon>
        <taxon>Primates</taxon>
        <taxon>Haplorrhini</taxon>
        <taxon>Catarrhini</taxon>
        <taxon>Cercopithecidae</taxon>
        <taxon>Cercopithecinae</taxon>
        <taxon>Macaca</taxon>
    </lineage>
</organism>
<comment type="function">
    <text evidence="2">Structure-specific nuclease with 5'-flap endonuclease and 5'-3' exonuclease activities involved in DNA replication and repair. During DNA replication, cleaves the 5'-overhanging flap structure that is generated by displacement synthesis when DNA polymerase encounters the 5'-end of a downstream Okazaki fragment. It enters the flap from the 5'-end and then tracks to cleave the flap base, leaving a nick for ligation. Also involved in the long patch base excision repair (LP-BER) pathway, by cleaving within the apurinic/apyrimidinic (AP) site-terminated flap. Acts as a genome stabilization factor that prevents flaps from equilibrating into structures that lead to duplications and deletions. Also possesses 5'-3' exonuclease activity on nicked or gapped double-stranded DNA, and exhibits RNase H activity. Also involved in replication and repair of rDNA and in repairing mitochondrial DNA.</text>
</comment>
<comment type="cofactor">
    <cofactor evidence="2">
        <name>Mg(2+)</name>
        <dbReference type="ChEBI" id="CHEBI:18420"/>
    </cofactor>
    <text evidence="2">Binds 2 magnesium ions per subunit. They probably participate in the reaction catalyzed by the enzyme. May bind an additional third magnesium ion after substrate binding.</text>
</comment>
<comment type="subunit">
    <text evidence="1 2">Interacts with PCNA. Three molecules of FEN1 bind to one PCNA trimer with each molecule binding to one PCNA monomer. PCNA stimulates the nuclease activity without altering cleavage specificity. The C-terminal domain binds EP300; can bind simultaneously to both PCNA and EP300. Interacts with DDX11; this interaction is direct and increases flap endonuclease activity of FEN1. Interacts with WDR4; regulating its endonuclease activity. Interacts with POLB.</text>
</comment>
<comment type="subcellular location">
    <subcellularLocation>
        <location evidence="2">Nucleus</location>
        <location evidence="2">Nucleolus</location>
    </subcellularLocation>
    <subcellularLocation>
        <location evidence="2">Nucleus</location>
        <location evidence="2">Nucleoplasm</location>
    </subcellularLocation>
    <subcellularLocation>
        <location evidence="2">Mitochondrion</location>
    </subcellularLocation>
    <text evidence="2">Resides mostly in the nucleoli and relocalizes to the nucleoplasm upon DNA damage.</text>
</comment>
<comment type="PTM">
    <text evidence="2">Acetylated by EP300. Acetylation inhibits both endonuclease and exonuclease activity. Acetylation also reduces DNA-binding activity but does not affect interaction with PCNA or EP300.</text>
</comment>
<comment type="PTM">
    <text evidence="2">Phosphorylation upon DNA damage induces relocalization to the nuclear plasma. Phosphorylation at Ser-187 by CDK2 occurs during late S-phase and results in dissociation from PCNA.</text>
</comment>
<comment type="PTM">
    <text evidence="2">Methylation at Arg-192 by PRMT5 impedes Ser-187 phosphorylation and increases interaction with PCNA.</text>
</comment>
<comment type="similarity">
    <text evidence="2">Belongs to the XPG/RAD2 endonuclease family. FEN1 subfamily.</text>
</comment>
<protein>
    <recommendedName>
        <fullName evidence="2">Flap endonuclease 1</fullName>
        <shortName evidence="2">FEN-1</shortName>
        <ecNumber evidence="2">3.1.-.-</ecNumber>
    </recommendedName>
    <alternativeName>
        <fullName evidence="2">Flap structure-specific endonuclease 1</fullName>
    </alternativeName>
</protein>
<reference key="1">
    <citation type="journal article" date="2005" name="Mol. Biol. Evol.">
        <title>Substitution rate and structural divergence of 5'UTR evolution: comparative analysis between human and cynomolgus monkey cDNAs.</title>
        <authorList>
            <person name="Osada N."/>
            <person name="Hirata M."/>
            <person name="Tanuma R."/>
            <person name="Kusuda J."/>
            <person name="Hida M."/>
            <person name="Suzuki Y."/>
            <person name="Sugano S."/>
            <person name="Gojobori T."/>
            <person name="Shen C.K."/>
            <person name="Wu C.I."/>
            <person name="Hashimoto K."/>
        </authorList>
    </citation>
    <scope>NUCLEOTIDE SEQUENCE [LARGE SCALE MRNA]</scope>
</reference>
<name>FEN1_MACFA</name>
<sequence length="380" mass="42551">MGIQGLAKLIADVAPSAIRENDIKSYFGRKVAIDASMSIYQFLIAVRQGGDVLQNEEGETTSHLMGMFYRTIRMMENGIKPVYVFDGKPPQLKSGELAKRSERRAEAEKQLQQAQAAGAEQEVEKFTKRLVKVTKQHNDECKHLLSLMGIPYLDAPSEAEASCAALVKAGKVYAAATEDMDCLTFGSPVLMRHLTASEAKKLPIQEFHLSRILQELGLNQEQFVDLCILLGSDYCESIRGIGPKRAVDLIQKHKSIEEIVRRLDPSKYPVPENWLHKEAHQLFLKPEVLDPESVELKWSEPNEEELVKFMCGEKQFSEERIRSGVKRLSKSRQGSTQGRLDDFFKVTGSLSSAKRKEPEPKGSTKKKAKTGAAGKFKRGK</sequence>
<keyword id="KW-0007">Acetylation</keyword>
<keyword id="KW-0227">DNA damage</keyword>
<keyword id="KW-0234">DNA repair</keyword>
<keyword id="KW-0235">DNA replication</keyword>
<keyword id="KW-0255">Endonuclease</keyword>
<keyword id="KW-0269">Exonuclease</keyword>
<keyword id="KW-0378">Hydrolase</keyword>
<keyword id="KW-0460">Magnesium</keyword>
<keyword id="KW-0479">Metal-binding</keyword>
<keyword id="KW-0488">Methylation</keyword>
<keyword id="KW-0496">Mitochondrion</keyword>
<keyword id="KW-0540">Nuclease</keyword>
<keyword id="KW-0539">Nucleus</keyword>
<keyword id="KW-0597">Phosphoprotein</keyword>
<keyword id="KW-1185">Reference proteome</keyword>
<feature type="chain" id="PRO_0000403483" description="Flap endonuclease 1">
    <location>
        <begin position="1"/>
        <end position="380"/>
    </location>
</feature>
<feature type="region of interest" description="N-domain">
    <location>
        <begin position="1"/>
        <end position="104"/>
    </location>
</feature>
<feature type="region of interest" description="I-domain">
    <location>
        <begin position="122"/>
        <end position="253"/>
    </location>
</feature>
<feature type="region of interest" description="Disordered" evidence="3">
    <location>
        <begin position="327"/>
        <end position="380"/>
    </location>
</feature>
<feature type="region of interest" description="Interaction with PCNA" evidence="2">
    <location>
        <begin position="336"/>
        <end position="344"/>
    </location>
</feature>
<feature type="compositionally biased region" description="Basic residues" evidence="3">
    <location>
        <begin position="363"/>
        <end position="380"/>
    </location>
</feature>
<feature type="binding site" evidence="2">
    <location>
        <position position="34"/>
    </location>
    <ligand>
        <name>Mg(2+)</name>
        <dbReference type="ChEBI" id="CHEBI:18420"/>
        <label>1</label>
    </ligand>
</feature>
<feature type="binding site" evidence="2">
    <location>
        <position position="47"/>
    </location>
    <ligand>
        <name>DNA</name>
        <dbReference type="ChEBI" id="CHEBI:16991"/>
    </ligand>
</feature>
<feature type="binding site" evidence="2">
    <location>
        <position position="70"/>
    </location>
    <ligand>
        <name>DNA</name>
        <dbReference type="ChEBI" id="CHEBI:16991"/>
    </ligand>
</feature>
<feature type="binding site" evidence="2">
    <location>
        <position position="86"/>
    </location>
    <ligand>
        <name>Mg(2+)</name>
        <dbReference type="ChEBI" id="CHEBI:18420"/>
        <label>1</label>
    </ligand>
</feature>
<feature type="binding site" evidence="2">
    <location>
        <position position="158"/>
    </location>
    <ligand>
        <name>DNA</name>
        <dbReference type="ChEBI" id="CHEBI:16991"/>
    </ligand>
</feature>
<feature type="binding site" evidence="2">
    <location>
        <position position="158"/>
    </location>
    <ligand>
        <name>Mg(2+)</name>
        <dbReference type="ChEBI" id="CHEBI:18420"/>
        <label>1</label>
    </ligand>
</feature>
<feature type="binding site" evidence="2">
    <location>
        <position position="160"/>
    </location>
    <ligand>
        <name>Mg(2+)</name>
        <dbReference type="ChEBI" id="CHEBI:18420"/>
        <label>1</label>
    </ligand>
</feature>
<feature type="binding site" evidence="2">
    <location>
        <position position="179"/>
    </location>
    <ligand>
        <name>Mg(2+)</name>
        <dbReference type="ChEBI" id="CHEBI:18420"/>
        <label>2</label>
    </ligand>
</feature>
<feature type="binding site" evidence="2">
    <location>
        <position position="181"/>
    </location>
    <ligand>
        <name>Mg(2+)</name>
        <dbReference type="ChEBI" id="CHEBI:18420"/>
        <label>2</label>
    </ligand>
</feature>
<feature type="binding site" evidence="2">
    <location>
        <position position="231"/>
    </location>
    <ligand>
        <name>DNA</name>
        <dbReference type="ChEBI" id="CHEBI:16991"/>
    </ligand>
</feature>
<feature type="binding site" evidence="2">
    <location>
        <position position="233"/>
    </location>
    <ligand>
        <name>DNA</name>
        <dbReference type="ChEBI" id="CHEBI:16991"/>
    </ligand>
</feature>
<feature type="binding site" evidence="2">
    <location>
        <position position="233"/>
    </location>
    <ligand>
        <name>Mg(2+)</name>
        <dbReference type="ChEBI" id="CHEBI:18420"/>
        <label>2</label>
    </ligand>
</feature>
<feature type="modified residue" description="Symmetric dimethylarginine; by PRMT5" evidence="1 2">
    <location>
        <position position="19"/>
    </location>
</feature>
<feature type="modified residue" description="N6-acetyllysine" evidence="1 2">
    <location>
        <position position="80"/>
    </location>
</feature>
<feature type="modified residue" description="Symmetric dimethylarginine; by PRMT5" evidence="1 2">
    <location>
        <position position="100"/>
    </location>
</feature>
<feature type="modified residue" description="Symmetric dimethylarginine; by PRMT5" evidence="1 2">
    <location>
        <position position="104"/>
    </location>
</feature>
<feature type="modified residue" description="Phosphoserine; by CDK2" evidence="1 2">
    <location>
        <position position="187"/>
    </location>
</feature>
<feature type="modified residue" description="Symmetric dimethylarginine; by PRMT5" evidence="1 2">
    <location>
        <position position="192"/>
    </location>
</feature>
<feature type="modified residue" description="Phosphoserine" evidence="1">
    <location>
        <position position="197"/>
    </location>
</feature>
<feature type="modified residue" description="Phosphoserine" evidence="1">
    <location>
        <position position="255"/>
    </location>
</feature>
<feature type="modified residue" description="Phosphoserine" evidence="1">
    <location>
        <position position="293"/>
    </location>
</feature>
<feature type="modified residue" description="Phosphoserine" evidence="1">
    <location>
        <position position="335"/>
    </location>
</feature>
<feature type="modified residue" description="Phosphothreonine" evidence="1">
    <location>
        <position position="336"/>
    </location>
</feature>
<feature type="modified residue" description="N6-acetyllysine" evidence="1 2">
    <location>
        <position position="354"/>
    </location>
</feature>
<feature type="modified residue" description="Phosphothreonine" evidence="1">
    <location>
        <position position="364"/>
    </location>
</feature>
<feature type="modified residue" description="N6-acetyllysine" evidence="1 2">
    <location>
        <position position="375"/>
    </location>
</feature>
<feature type="modified residue" description="N6-acetyllysine" evidence="1 2">
    <location>
        <position position="377"/>
    </location>
</feature>
<feature type="modified residue" description="N6-acetyllysine" evidence="1 2">
    <location>
        <position position="380"/>
    </location>
</feature>
<gene>
    <name evidence="2" type="primary">FEN1</name>
    <name type="ORF">QtsA-20746</name>
</gene>
<dbReference type="EC" id="3.1.-.-" evidence="2"/>
<dbReference type="EMBL" id="AB169448">
    <property type="protein sequence ID" value="BAE01530.1"/>
    <property type="molecule type" value="mRNA"/>
</dbReference>
<dbReference type="RefSeq" id="NP_001272108.1">
    <property type="nucleotide sequence ID" value="NM_001285179.1"/>
</dbReference>
<dbReference type="RefSeq" id="XP_045227913.1">
    <property type="nucleotide sequence ID" value="XM_045371978.2"/>
</dbReference>
<dbReference type="SMR" id="Q4R5U5"/>
<dbReference type="STRING" id="9541.ENSMFAP00000010734"/>
<dbReference type="Ensembl" id="ENSMFAT00000042867.2">
    <property type="protein sequence ID" value="ENSMFAP00000010734.1"/>
    <property type="gene ID" value="ENSMFAG00000009480.2"/>
</dbReference>
<dbReference type="GeneID" id="101926627"/>
<dbReference type="VEuPathDB" id="HostDB:ENSMFAG00000009480"/>
<dbReference type="eggNOG" id="KOG2519">
    <property type="taxonomic scope" value="Eukaryota"/>
</dbReference>
<dbReference type="GeneTree" id="ENSGT00940000155807"/>
<dbReference type="OMA" id="MGIPWVQ"/>
<dbReference type="Proteomes" id="UP000233100">
    <property type="component" value="Chromosome 14"/>
</dbReference>
<dbReference type="Bgee" id="ENSMFAG00000009480">
    <property type="expression patterns" value="Expressed in skeletal muscle tissue and 13 other cell types or tissues"/>
</dbReference>
<dbReference type="GO" id="GO:0000781">
    <property type="term" value="C:chromosome, telomeric region"/>
    <property type="evidence" value="ECO:0007669"/>
    <property type="project" value="Ensembl"/>
</dbReference>
<dbReference type="GO" id="GO:0005739">
    <property type="term" value="C:mitochondrion"/>
    <property type="evidence" value="ECO:0007669"/>
    <property type="project" value="UniProtKB-SubCell"/>
</dbReference>
<dbReference type="GO" id="GO:0005730">
    <property type="term" value="C:nucleolus"/>
    <property type="evidence" value="ECO:0007669"/>
    <property type="project" value="UniProtKB-SubCell"/>
</dbReference>
<dbReference type="GO" id="GO:0005654">
    <property type="term" value="C:nucleoplasm"/>
    <property type="evidence" value="ECO:0007669"/>
    <property type="project" value="UniProtKB-SubCell"/>
</dbReference>
<dbReference type="GO" id="GO:0005634">
    <property type="term" value="C:nucleus"/>
    <property type="evidence" value="ECO:0000250"/>
    <property type="project" value="UniProtKB"/>
</dbReference>
<dbReference type="GO" id="GO:0032991">
    <property type="term" value="C:protein-containing complex"/>
    <property type="evidence" value="ECO:0007669"/>
    <property type="project" value="Ensembl"/>
</dbReference>
<dbReference type="GO" id="GO:0008409">
    <property type="term" value="F:5'-3' exonuclease activity"/>
    <property type="evidence" value="ECO:0007669"/>
    <property type="project" value="UniProtKB-UniRule"/>
</dbReference>
<dbReference type="GO" id="GO:0017108">
    <property type="term" value="F:5'-flap endonuclease activity"/>
    <property type="evidence" value="ECO:0007669"/>
    <property type="project" value="UniProtKB-UniRule"/>
</dbReference>
<dbReference type="GO" id="GO:0003677">
    <property type="term" value="F:DNA binding"/>
    <property type="evidence" value="ECO:0007669"/>
    <property type="project" value="UniProtKB-UniRule"/>
</dbReference>
<dbReference type="GO" id="GO:0000287">
    <property type="term" value="F:magnesium ion binding"/>
    <property type="evidence" value="ECO:0007669"/>
    <property type="project" value="UniProtKB-UniRule"/>
</dbReference>
<dbReference type="GO" id="GO:0030145">
    <property type="term" value="F:manganese ion binding"/>
    <property type="evidence" value="ECO:0007669"/>
    <property type="project" value="TreeGrafter"/>
</dbReference>
<dbReference type="GO" id="GO:0004523">
    <property type="term" value="F:RNA-DNA hybrid ribonuclease activity"/>
    <property type="evidence" value="ECO:0007669"/>
    <property type="project" value="Ensembl"/>
</dbReference>
<dbReference type="GO" id="GO:0006284">
    <property type="term" value="P:base-excision repair"/>
    <property type="evidence" value="ECO:0007669"/>
    <property type="project" value="UniProtKB-UniRule"/>
</dbReference>
<dbReference type="GO" id="GO:0006310">
    <property type="term" value="P:DNA recombination"/>
    <property type="evidence" value="ECO:0007669"/>
    <property type="project" value="UniProtKB-ARBA"/>
</dbReference>
<dbReference type="GO" id="GO:0043137">
    <property type="term" value="P:DNA replication, removal of RNA primer"/>
    <property type="evidence" value="ECO:0007669"/>
    <property type="project" value="UniProtKB-UniRule"/>
</dbReference>
<dbReference type="GO" id="GO:0045876">
    <property type="term" value="P:positive regulation of sister chromatid cohesion"/>
    <property type="evidence" value="ECO:0007669"/>
    <property type="project" value="Ensembl"/>
</dbReference>
<dbReference type="CDD" id="cd09907">
    <property type="entry name" value="H3TH_FEN1-Euk"/>
    <property type="match status" value="1"/>
</dbReference>
<dbReference type="CDD" id="cd09867">
    <property type="entry name" value="PIN_FEN1"/>
    <property type="match status" value="1"/>
</dbReference>
<dbReference type="FunFam" id="1.10.150.20:FF:000009">
    <property type="entry name" value="Flap endonuclease 1"/>
    <property type="match status" value="1"/>
</dbReference>
<dbReference type="FunFam" id="3.40.50.1010:FF:000003">
    <property type="entry name" value="Flap endonuclease 1"/>
    <property type="match status" value="1"/>
</dbReference>
<dbReference type="Gene3D" id="1.10.150.20">
    <property type="entry name" value="5' to 3' exonuclease, C-terminal subdomain"/>
    <property type="match status" value="1"/>
</dbReference>
<dbReference type="Gene3D" id="3.40.50.1010">
    <property type="entry name" value="5'-nuclease"/>
    <property type="match status" value="1"/>
</dbReference>
<dbReference type="HAMAP" id="MF_00614">
    <property type="entry name" value="Fen"/>
    <property type="match status" value="1"/>
</dbReference>
<dbReference type="InterPro" id="IPR036279">
    <property type="entry name" value="5-3_exonuclease_C_sf"/>
</dbReference>
<dbReference type="InterPro" id="IPR023426">
    <property type="entry name" value="Flap_endonuc"/>
</dbReference>
<dbReference type="InterPro" id="IPR008918">
    <property type="entry name" value="HhH2"/>
</dbReference>
<dbReference type="InterPro" id="IPR029060">
    <property type="entry name" value="PIN-like_dom_sf"/>
</dbReference>
<dbReference type="InterPro" id="IPR006086">
    <property type="entry name" value="XPG-I_dom"/>
</dbReference>
<dbReference type="InterPro" id="IPR006084">
    <property type="entry name" value="XPG/Rad2"/>
</dbReference>
<dbReference type="InterPro" id="IPR019974">
    <property type="entry name" value="XPG_CS"/>
</dbReference>
<dbReference type="InterPro" id="IPR006085">
    <property type="entry name" value="XPG_DNA_repair_N"/>
</dbReference>
<dbReference type="PANTHER" id="PTHR11081:SF9">
    <property type="entry name" value="FLAP ENDONUCLEASE 1"/>
    <property type="match status" value="1"/>
</dbReference>
<dbReference type="PANTHER" id="PTHR11081">
    <property type="entry name" value="FLAP ENDONUCLEASE FAMILY MEMBER"/>
    <property type="match status" value="1"/>
</dbReference>
<dbReference type="Pfam" id="PF00867">
    <property type="entry name" value="XPG_I"/>
    <property type="match status" value="1"/>
</dbReference>
<dbReference type="Pfam" id="PF00752">
    <property type="entry name" value="XPG_N"/>
    <property type="match status" value="1"/>
</dbReference>
<dbReference type="PRINTS" id="PR00853">
    <property type="entry name" value="XPGRADSUPER"/>
</dbReference>
<dbReference type="SMART" id="SM00279">
    <property type="entry name" value="HhH2"/>
    <property type="match status" value="1"/>
</dbReference>
<dbReference type="SMART" id="SM00484">
    <property type="entry name" value="XPGI"/>
    <property type="match status" value="1"/>
</dbReference>
<dbReference type="SMART" id="SM00485">
    <property type="entry name" value="XPGN"/>
    <property type="match status" value="1"/>
</dbReference>
<dbReference type="SUPFAM" id="SSF47807">
    <property type="entry name" value="5' to 3' exonuclease, C-terminal subdomain"/>
    <property type="match status" value="1"/>
</dbReference>
<dbReference type="SUPFAM" id="SSF88723">
    <property type="entry name" value="PIN domain-like"/>
    <property type="match status" value="1"/>
</dbReference>
<dbReference type="PROSITE" id="PS00841">
    <property type="entry name" value="XPG_1"/>
    <property type="match status" value="1"/>
</dbReference>
<dbReference type="PROSITE" id="PS00842">
    <property type="entry name" value="XPG_2"/>
    <property type="match status" value="1"/>
</dbReference>
<accession>Q4R5U5</accession>
<proteinExistence type="evidence at transcript level"/>
<evidence type="ECO:0000250" key="1">
    <source>
        <dbReference type="UniProtKB" id="P39748"/>
    </source>
</evidence>
<evidence type="ECO:0000255" key="2">
    <source>
        <dbReference type="HAMAP-Rule" id="MF_03140"/>
    </source>
</evidence>
<evidence type="ECO:0000256" key="3">
    <source>
        <dbReference type="SAM" id="MobiDB-lite"/>
    </source>
</evidence>